<evidence type="ECO:0000255" key="1">
    <source>
        <dbReference type="HAMAP-Rule" id="MF_01389"/>
    </source>
</evidence>
<reference key="1">
    <citation type="submission" date="2006-03" db="EMBL/GenBank/DDBJ databases">
        <title>Complete sequence of Methylobacillus flagellatus KT.</title>
        <authorList>
            <consortium name="US DOE Joint Genome Institute"/>
            <person name="Copeland A."/>
            <person name="Lucas S."/>
            <person name="Lapidus A."/>
            <person name="Barry K."/>
            <person name="Detter J.C."/>
            <person name="Glavina del Rio T."/>
            <person name="Hammon N."/>
            <person name="Israni S."/>
            <person name="Dalin E."/>
            <person name="Tice H."/>
            <person name="Pitluck S."/>
            <person name="Brettin T."/>
            <person name="Bruce D."/>
            <person name="Han C."/>
            <person name="Tapia R."/>
            <person name="Saunders E."/>
            <person name="Gilna P."/>
            <person name="Schmutz J."/>
            <person name="Larimer F."/>
            <person name="Land M."/>
            <person name="Kyrpides N."/>
            <person name="Anderson I."/>
            <person name="Richardson P."/>
        </authorList>
    </citation>
    <scope>NUCLEOTIDE SEQUENCE [LARGE SCALE GENOMIC DNA]</scope>
    <source>
        <strain>ATCC 51484 / DSM 6875 / VKM B-1610 / KT</strain>
    </source>
</reference>
<dbReference type="EMBL" id="CP000284">
    <property type="protein sequence ID" value="ABE50032.1"/>
    <property type="molecule type" value="Genomic_DNA"/>
</dbReference>
<dbReference type="RefSeq" id="WP_011479986.1">
    <property type="nucleotide sequence ID" value="NC_007947.1"/>
</dbReference>
<dbReference type="SMR" id="Q1H0F5"/>
<dbReference type="STRING" id="265072.Mfla_1764"/>
<dbReference type="KEGG" id="mfa:Mfla_1764"/>
<dbReference type="eggNOG" id="COG0378">
    <property type="taxonomic scope" value="Bacteria"/>
</dbReference>
<dbReference type="HOGENOM" id="CLU_072144_1_0_4"/>
<dbReference type="OrthoDB" id="9802035at2"/>
<dbReference type="Proteomes" id="UP000002440">
    <property type="component" value="Chromosome"/>
</dbReference>
<dbReference type="GO" id="GO:0005737">
    <property type="term" value="C:cytoplasm"/>
    <property type="evidence" value="ECO:0007669"/>
    <property type="project" value="UniProtKB-SubCell"/>
</dbReference>
<dbReference type="GO" id="GO:0005525">
    <property type="term" value="F:GTP binding"/>
    <property type="evidence" value="ECO:0007669"/>
    <property type="project" value="UniProtKB-KW"/>
</dbReference>
<dbReference type="GO" id="GO:0003924">
    <property type="term" value="F:GTPase activity"/>
    <property type="evidence" value="ECO:0007669"/>
    <property type="project" value="InterPro"/>
</dbReference>
<dbReference type="GO" id="GO:0016151">
    <property type="term" value="F:nickel cation binding"/>
    <property type="evidence" value="ECO:0007669"/>
    <property type="project" value="UniProtKB-UniRule"/>
</dbReference>
<dbReference type="GO" id="GO:0043419">
    <property type="term" value="P:urea catabolic process"/>
    <property type="evidence" value="ECO:0007669"/>
    <property type="project" value="InterPro"/>
</dbReference>
<dbReference type="CDD" id="cd05540">
    <property type="entry name" value="UreG"/>
    <property type="match status" value="1"/>
</dbReference>
<dbReference type="FunFam" id="3.40.50.300:FF:000208">
    <property type="entry name" value="Urease accessory protein UreG"/>
    <property type="match status" value="1"/>
</dbReference>
<dbReference type="Gene3D" id="3.40.50.300">
    <property type="entry name" value="P-loop containing nucleotide triphosphate hydrolases"/>
    <property type="match status" value="1"/>
</dbReference>
<dbReference type="HAMAP" id="MF_01389">
    <property type="entry name" value="UreG"/>
    <property type="match status" value="1"/>
</dbReference>
<dbReference type="InterPro" id="IPR003495">
    <property type="entry name" value="CobW/HypB/UreG_nucleotide-bd"/>
</dbReference>
<dbReference type="InterPro" id="IPR027417">
    <property type="entry name" value="P-loop_NTPase"/>
</dbReference>
<dbReference type="InterPro" id="IPR004400">
    <property type="entry name" value="UreG"/>
</dbReference>
<dbReference type="NCBIfam" id="TIGR00101">
    <property type="entry name" value="ureG"/>
    <property type="match status" value="1"/>
</dbReference>
<dbReference type="PANTHER" id="PTHR31715">
    <property type="entry name" value="UREASE ACCESSORY PROTEIN G"/>
    <property type="match status" value="1"/>
</dbReference>
<dbReference type="PANTHER" id="PTHR31715:SF0">
    <property type="entry name" value="UREASE ACCESSORY PROTEIN G"/>
    <property type="match status" value="1"/>
</dbReference>
<dbReference type="Pfam" id="PF02492">
    <property type="entry name" value="cobW"/>
    <property type="match status" value="1"/>
</dbReference>
<dbReference type="PIRSF" id="PIRSF005624">
    <property type="entry name" value="Ni-bind_GTPase"/>
    <property type="match status" value="1"/>
</dbReference>
<dbReference type="SUPFAM" id="SSF52540">
    <property type="entry name" value="P-loop containing nucleoside triphosphate hydrolases"/>
    <property type="match status" value="1"/>
</dbReference>
<proteinExistence type="inferred from homology"/>
<protein>
    <recommendedName>
        <fullName evidence="1">Urease accessory protein UreG</fullName>
    </recommendedName>
</protein>
<gene>
    <name evidence="1" type="primary">ureG</name>
    <name type="ordered locus">Mfla_1764</name>
</gene>
<keyword id="KW-0143">Chaperone</keyword>
<keyword id="KW-0963">Cytoplasm</keyword>
<keyword id="KW-0342">GTP-binding</keyword>
<keyword id="KW-0996">Nickel insertion</keyword>
<keyword id="KW-0547">Nucleotide-binding</keyword>
<keyword id="KW-1185">Reference proteome</keyword>
<organism>
    <name type="scientific">Methylobacillus flagellatus (strain ATCC 51484 / DSM 6875 / VKM B-1610 / KT)</name>
    <dbReference type="NCBI Taxonomy" id="265072"/>
    <lineage>
        <taxon>Bacteria</taxon>
        <taxon>Pseudomonadati</taxon>
        <taxon>Pseudomonadota</taxon>
        <taxon>Betaproteobacteria</taxon>
        <taxon>Nitrosomonadales</taxon>
        <taxon>Methylophilaceae</taxon>
        <taxon>Methylobacillus</taxon>
    </lineage>
</organism>
<name>UREG_METFK</name>
<comment type="function">
    <text evidence="1">Facilitates the functional incorporation of the urease nickel metallocenter. This process requires GTP hydrolysis, probably effectuated by UreG.</text>
</comment>
<comment type="subunit">
    <text evidence="1">Homodimer. UreD, UreF and UreG form a complex that acts as a GTP-hydrolysis-dependent molecular chaperone, activating the urease apoprotein by helping to assemble the nickel containing metallocenter of UreC. The UreE protein probably delivers the nickel.</text>
</comment>
<comment type="subcellular location">
    <subcellularLocation>
        <location evidence="1">Cytoplasm</location>
    </subcellularLocation>
</comment>
<comment type="similarity">
    <text evidence="1">Belongs to the SIMIBI class G3E GTPase family. UreG subfamily.</text>
</comment>
<feature type="chain" id="PRO_0000347401" description="Urease accessory protein UreG">
    <location>
        <begin position="1"/>
        <end position="203"/>
    </location>
</feature>
<feature type="binding site" evidence="1">
    <location>
        <begin position="13"/>
        <end position="20"/>
    </location>
    <ligand>
        <name>GTP</name>
        <dbReference type="ChEBI" id="CHEBI:37565"/>
    </ligand>
</feature>
<accession>Q1H0F5</accession>
<sequence>MQIKEPLRVGIGGPVGSGKTALTLALCQRLRNVYNIAVVTNDIYTREDAEFLTRNEALAPERIIGVETGGCPHTAIREDASMNLEAVAQLSERFNPLDIVFVESGGDNLAATFSPELSDLTIYVIDVAAGEKIPRKGGPGITKSDLLVINKIDLAPMVGASLEVMEKDARRMRGERPFIFTNLKRGQGLEDIVGFIEKQGLML</sequence>